<protein>
    <recommendedName>
        <fullName evidence="1">Histidinol-phosphate aminotransferase</fullName>
        <ecNumber evidence="1">2.6.1.9</ecNumber>
    </recommendedName>
    <alternativeName>
        <fullName evidence="1">Imidazole acetol-phosphate transaminase</fullName>
    </alternativeName>
</protein>
<dbReference type="EC" id="2.6.1.9" evidence="1"/>
<dbReference type="EMBL" id="CP000232">
    <property type="protein sequence ID" value="ABC18845.1"/>
    <property type="molecule type" value="Genomic_DNA"/>
</dbReference>
<dbReference type="RefSeq" id="YP_429388.1">
    <property type="nucleotide sequence ID" value="NC_007644.1"/>
</dbReference>
<dbReference type="SMR" id="Q2RL44"/>
<dbReference type="STRING" id="264732.Moth_0515"/>
<dbReference type="EnsemblBacteria" id="ABC18845">
    <property type="protein sequence ID" value="ABC18845"/>
    <property type="gene ID" value="Moth_0515"/>
</dbReference>
<dbReference type="KEGG" id="mta:Moth_0515"/>
<dbReference type="PATRIC" id="fig|264732.11.peg.554"/>
<dbReference type="eggNOG" id="COG0079">
    <property type="taxonomic scope" value="Bacteria"/>
</dbReference>
<dbReference type="HOGENOM" id="CLU_017584_3_3_9"/>
<dbReference type="OrthoDB" id="9813612at2"/>
<dbReference type="UniPathway" id="UPA00031">
    <property type="reaction ID" value="UER00012"/>
</dbReference>
<dbReference type="GO" id="GO:0004400">
    <property type="term" value="F:histidinol-phosphate transaminase activity"/>
    <property type="evidence" value="ECO:0007669"/>
    <property type="project" value="UniProtKB-UniRule"/>
</dbReference>
<dbReference type="GO" id="GO:0030170">
    <property type="term" value="F:pyridoxal phosphate binding"/>
    <property type="evidence" value="ECO:0007669"/>
    <property type="project" value="InterPro"/>
</dbReference>
<dbReference type="GO" id="GO:0000105">
    <property type="term" value="P:L-histidine biosynthetic process"/>
    <property type="evidence" value="ECO:0007669"/>
    <property type="project" value="UniProtKB-UniRule"/>
</dbReference>
<dbReference type="CDD" id="cd00609">
    <property type="entry name" value="AAT_like"/>
    <property type="match status" value="1"/>
</dbReference>
<dbReference type="Gene3D" id="3.90.1150.10">
    <property type="entry name" value="Aspartate Aminotransferase, domain 1"/>
    <property type="match status" value="1"/>
</dbReference>
<dbReference type="Gene3D" id="3.40.640.10">
    <property type="entry name" value="Type I PLP-dependent aspartate aminotransferase-like (Major domain)"/>
    <property type="match status" value="1"/>
</dbReference>
<dbReference type="HAMAP" id="MF_01023">
    <property type="entry name" value="HisC_aminotrans_2"/>
    <property type="match status" value="1"/>
</dbReference>
<dbReference type="InterPro" id="IPR004839">
    <property type="entry name" value="Aminotransferase_I/II_large"/>
</dbReference>
<dbReference type="InterPro" id="IPR005861">
    <property type="entry name" value="HisP_aminotrans"/>
</dbReference>
<dbReference type="InterPro" id="IPR050106">
    <property type="entry name" value="HistidinolP_aminotransfase"/>
</dbReference>
<dbReference type="InterPro" id="IPR015424">
    <property type="entry name" value="PyrdxlP-dep_Trfase"/>
</dbReference>
<dbReference type="InterPro" id="IPR015421">
    <property type="entry name" value="PyrdxlP-dep_Trfase_major"/>
</dbReference>
<dbReference type="InterPro" id="IPR015422">
    <property type="entry name" value="PyrdxlP-dep_Trfase_small"/>
</dbReference>
<dbReference type="NCBIfam" id="TIGR01141">
    <property type="entry name" value="hisC"/>
    <property type="match status" value="1"/>
</dbReference>
<dbReference type="PANTHER" id="PTHR43643:SF3">
    <property type="entry name" value="HISTIDINOL-PHOSPHATE AMINOTRANSFERASE"/>
    <property type="match status" value="1"/>
</dbReference>
<dbReference type="PANTHER" id="PTHR43643">
    <property type="entry name" value="HISTIDINOL-PHOSPHATE AMINOTRANSFERASE 2"/>
    <property type="match status" value="1"/>
</dbReference>
<dbReference type="Pfam" id="PF00155">
    <property type="entry name" value="Aminotran_1_2"/>
    <property type="match status" value="1"/>
</dbReference>
<dbReference type="SUPFAM" id="SSF53383">
    <property type="entry name" value="PLP-dependent transferases"/>
    <property type="match status" value="1"/>
</dbReference>
<feature type="chain" id="PRO_0000230216" description="Histidinol-phosphate aminotransferase">
    <location>
        <begin position="1"/>
        <end position="386"/>
    </location>
</feature>
<feature type="region of interest" description="Disordered" evidence="2">
    <location>
        <begin position="1"/>
        <end position="22"/>
    </location>
</feature>
<feature type="compositionally biased region" description="Polar residues" evidence="2">
    <location>
        <begin position="1"/>
        <end position="11"/>
    </location>
</feature>
<feature type="modified residue" description="N6-(pyridoxal phosphate)lysine" evidence="1">
    <location>
        <position position="248"/>
    </location>
</feature>
<reference key="1">
    <citation type="journal article" date="2008" name="Environ. Microbiol.">
        <title>The complete genome sequence of Moorella thermoacetica (f. Clostridium thermoaceticum).</title>
        <authorList>
            <person name="Pierce E."/>
            <person name="Xie G."/>
            <person name="Barabote R.D."/>
            <person name="Saunders E."/>
            <person name="Han C.S."/>
            <person name="Detter J.C."/>
            <person name="Richardson P."/>
            <person name="Brettin T.S."/>
            <person name="Das A."/>
            <person name="Ljungdahl L.G."/>
            <person name="Ragsdale S.W."/>
        </authorList>
    </citation>
    <scope>NUCLEOTIDE SEQUENCE [LARGE SCALE GENOMIC DNA]</scope>
    <source>
        <strain>ATCC 39073 / JCM 9320</strain>
    </source>
</reference>
<keyword id="KW-0028">Amino-acid biosynthesis</keyword>
<keyword id="KW-0032">Aminotransferase</keyword>
<keyword id="KW-0368">Histidine biosynthesis</keyword>
<keyword id="KW-0663">Pyridoxal phosphate</keyword>
<keyword id="KW-0808">Transferase</keyword>
<comment type="catalytic activity">
    <reaction evidence="1">
        <text>L-histidinol phosphate + 2-oxoglutarate = 3-(imidazol-4-yl)-2-oxopropyl phosphate + L-glutamate</text>
        <dbReference type="Rhea" id="RHEA:23744"/>
        <dbReference type="ChEBI" id="CHEBI:16810"/>
        <dbReference type="ChEBI" id="CHEBI:29985"/>
        <dbReference type="ChEBI" id="CHEBI:57766"/>
        <dbReference type="ChEBI" id="CHEBI:57980"/>
        <dbReference type="EC" id="2.6.1.9"/>
    </reaction>
</comment>
<comment type="cofactor">
    <cofactor evidence="1">
        <name>pyridoxal 5'-phosphate</name>
        <dbReference type="ChEBI" id="CHEBI:597326"/>
    </cofactor>
</comment>
<comment type="pathway">
    <text evidence="1">Amino-acid biosynthesis; L-histidine biosynthesis; L-histidine from 5-phospho-alpha-D-ribose 1-diphosphate: step 7/9.</text>
</comment>
<comment type="subunit">
    <text evidence="1">Homodimer.</text>
</comment>
<comment type="similarity">
    <text evidence="1">Belongs to the class-II pyridoxal-phosphate-dependent aminotransferase family. Histidinol-phosphate aminotransferase subfamily.</text>
</comment>
<gene>
    <name evidence="1" type="primary">hisC</name>
    <name type="ordered locus">Moth_0515</name>
</gene>
<evidence type="ECO:0000255" key="1">
    <source>
        <dbReference type="HAMAP-Rule" id="MF_01023"/>
    </source>
</evidence>
<evidence type="ECO:0000256" key="2">
    <source>
        <dbReference type="SAM" id="MobiDB-lite"/>
    </source>
</evidence>
<proteinExistence type="inferred from homology"/>
<organism>
    <name type="scientific">Moorella thermoacetica (strain ATCC 39073 / JCM 9320)</name>
    <dbReference type="NCBI Taxonomy" id="264732"/>
    <lineage>
        <taxon>Bacteria</taxon>
        <taxon>Bacillati</taxon>
        <taxon>Bacillota</taxon>
        <taxon>Clostridia</taxon>
        <taxon>Moorellales</taxon>
        <taxon>Moorellaceae</taxon>
        <taxon>Moorella</taxon>
    </lineage>
</organism>
<accession>Q2RL44</accession>
<sequence>MMVRKSTASNRRLQDKGDEEPVATVPKCREAILSIKPYVPGKPIEEVQRELGVKDVIKLASNENPLGPSPDAVQALQEASDRIFLYPDGNCYYLKEALAAKLGVKQENLIIGNGTDEILKMLAETYINPGDEIVVADPTFSEYEFAAQVMGGRAIKVPTRNFRHDLAAMAAAITPRTRLVFVCNPNNPTGTIVGQAALDGFLKQVPPSVLVVLDEAYSDYVTAEHYPNSLAYVRAGRANVIILRTFSKIYGLAGLRVGYGVAVPEIIRDLNRVREPFNVNLLAQVAAVAALKDEAHVGKSREVNSEGKDYLYSQFESLGLKYVPTEANFIFVDIQRDSREVFRQLLQKGVIVRTGDIFGYDTFLRVTIGTRRQNETFIRALREILA</sequence>
<name>HIS8_MOOTA</name>